<comment type="function">
    <text evidence="1">Catalyzes the rearrangement of 1-deoxy-D-xylulose 5-phosphate (DXP) to produce the thiazole phosphate moiety of thiamine. Sulfur is provided by the thiocarboxylate moiety of the carrier protein ThiS. In vitro, sulfur can be provided by H(2)S.</text>
</comment>
<comment type="catalytic activity">
    <reaction evidence="1">
        <text>[ThiS sulfur-carrier protein]-C-terminal-Gly-aminoethanethioate + 2-iminoacetate + 1-deoxy-D-xylulose 5-phosphate = [ThiS sulfur-carrier protein]-C-terminal Gly-Gly + 2-[(2R,5Z)-2-carboxy-4-methylthiazol-5(2H)-ylidene]ethyl phosphate + 2 H2O + H(+)</text>
        <dbReference type="Rhea" id="RHEA:26297"/>
        <dbReference type="Rhea" id="RHEA-COMP:12909"/>
        <dbReference type="Rhea" id="RHEA-COMP:19908"/>
        <dbReference type="ChEBI" id="CHEBI:15377"/>
        <dbReference type="ChEBI" id="CHEBI:15378"/>
        <dbReference type="ChEBI" id="CHEBI:57792"/>
        <dbReference type="ChEBI" id="CHEBI:62899"/>
        <dbReference type="ChEBI" id="CHEBI:77846"/>
        <dbReference type="ChEBI" id="CHEBI:90778"/>
        <dbReference type="ChEBI" id="CHEBI:232372"/>
        <dbReference type="EC" id="2.8.1.10"/>
    </reaction>
</comment>
<comment type="pathway">
    <text evidence="1">Cofactor biosynthesis; thiamine diphosphate biosynthesis.</text>
</comment>
<comment type="subunit">
    <text evidence="1">Homotetramer. Forms heterodimers with either ThiH or ThiS.</text>
</comment>
<comment type="subcellular location">
    <subcellularLocation>
        <location evidence="1">Cytoplasm</location>
    </subcellularLocation>
</comment>
<comment type="similarity">
    <text evidence="1">Belongs to the ThiG family.</text>
</comment>
<evidence type="ECO:0000255" key="1">
    <source>
        <dbReference type="HAMAP-Rule" id="MF_00443"/>
    </source>
</evidence>
<feature type="chain" id="PRO_1000124598" description="Thiazole synthase">
    <location>
        <begin position="1"/>
        <end position="255"/>
    </location>
</feature>
<feature type="active site" description="Schiff-base intermediate with DXP" evidence="1">
    <location>
        <position position="96"/>
    </location>
</feature>
<feature type="binding site" evidence="1">
    <location>
        <position position="157"/>
    </location>
    <ligand>
        <name>1-deoxy-D-xylulose 5-phosphate</name>
        <dbReference type="ChEBI" id="CHEBI:57792"/>
    </ligand>
</feature>
<feature type="binding site" evidence="1">
    <location>
        <begin position="183"/>
        <end position="184"/>
    </location>
    <ligand>
        <name>1-deoxy-D-xylulose 5-phosphate</name>
        <dbReference type="ChEBI" id="CHEBI:57792"/>
    </ligand>
</feature>
<feature type="binding site" evidence="1">
    <location>
        <begin position="205"/>
        <end position="206"/>
    </location>
    <ligand>
        <name>1-deoxy-D-xylulose 5-phosphate</name>
        <dbReference type="ChEBI" id="CHEBI:57792"/>
    </ligand>
</feature>
<protein>
    <recommendedName>
        <fullName evidence="1">Thiazole synthase</fullName>
        <ecNumber evidence="1">2.8.1.10</ecNumber>
    </recommendedName>
</protein>
<accession>B7GEY2</accession>
<sequence length="255" mass="27007">MLQIGPYTFQSRLLLGTGKYPNIDIQKEAVEASGAEILTFAVRRMNIFAPDQPNFLEKIDVTKYKLLPNTAGAKTAEEAVRIARLAKASGLCDMVKVEVIGCDQTLLPDPVETLKATEMLLEEGFIVLPYTSDDVVLAKRLQQLGCHAIMPGASPIGSGQGIINPLNIQFIIEQATVPVIIDAGIGGPADAALAMELGADGVLLNTAVASAKDPVKMAKAMKLAIEAGRLGYEAGRIPKKKYATASSPSEGMSIV</sequence>
<name>THIG_ANOFW</name>
<gene>
    <name evidence="1" type="primary">thiG</name>
    <name type="ordered locus">Aflv_2313</name>
</gene>
<proteinExistence type="inferred from homology"/>
<keyword id="KW-0963">Cytoplasm</keyword>
<keyword id="KW-0704">Schiff base</keyword>
<keyword id="KW-0784">Thiamine biosynthesis</keyword>
<keyword id="KW-0808">Transferase</keyword>
<organism>
    <name type="scientific">Anoxybacillus flavithermus (strain DSM 21510 / WK1)</name>
    <dbReference type="NCBI Taxonomy" id="491915"/>
    <lineage>
        <taxon>Bacteria</taxon>
        <taxon>Bacillati</taxon>
        <taxon>Bacillota</taxon>
        <taxon>Bacilli</taxon>
        <taxon>Bacillales</taxon>
        <taxon>Anoxybacillaceae</taxon>
        <taxon>Anoxybacillus</taxon>
    </lineage>
</organism>
<dbReference type="EC" id="2.8.1.10" evidence="1"/>
<dbReference type="EMBL" id="CP000922">
    <property type="protein sequence ID" value="ACJ34670.1"/>
    <property type="molecule type" value="Genomic_DNA"/>
</dbReference>
<dbReference type="RefSeq" id="WP_012575843.1">
    <property type="nucleotide sequence ID" value="NC_011567.1"/>
</dbReference>
<dbReference type="SMR" id="B7GEY2"/>
<dbReference type="STRING" id="491915.Aflv_2313"/>
<dbReference type="GeneID" id="7038565"/>
<dbReference type="KEGG" id="afl:Aflv_2313"/>
<dbReference type="PATRIC" id="fig|491915.6.peg.2380"/>
<dbReference type="eggNOG" id="COG2022">
    <property type="taxonomic scope" value="Bacteria"/>
</dbReference>
<dbReference type="HOGENOM" id="CLU_062233_1_0_9"/>
<dbReference type="UniPathway" id="UPA00060"/>
<dbReference type="Proteomes" id="UP000000742">
    <property type="component" value="Chromosome"/>
</dbReference>
<dbReference type="GO" id="GO:0005737">
    <property type="term" value="C:cytoplasm"/>
    <property type="evidence" value="ECO:0007669"/>
    <property type="project" value="UniProtKB-SubCell"/>
</dbReference>
<dbReference type="GO" id="GO:1990107">
    <property type="term" value="F:thiazole synthase activity"/>
    <property type="evidence" value="ECO:0007669"/>
    <property type="project" value="UniProtKB-EC"/>
</dbReference>
<dbReference type="GO" id="GO:0009229">
    <property type="term" value="P:thiamine diphosphate biosynthetic process"/>
    <property type="evidence" value="ECO:0007669"/>
    <property type="project" value="UniProtKB-UniRule"/>
</dbReference>
<dbReference type="CDD" id="cd04728">
    <property type="entry name" value="ThiG"/>
    <property type="match status" value="1"/>
</dbReference>
<dbReference type="FunFam" id="3.20.20.70:FF:000049">
    <property type="entry name" value="Thiazole synthase"/>
    <property type="match status" value="1"/>
</dbReference>
<dbReference type="Gene3D" id="3.20.20.70">
    <property type="entry name" value="Aldolase class I"/>
    <property type="match status" value="1"/>
</dbReference>
<dbReference type="HAMAP" id="MF_00443">
    <property type="entry name" value="ThiG"/>
    <property type="match status" value="1"/>
</dbReference>
<dbReference type="InterPro" id="IPR013785">
    <property type="entry name" value="Aldolase_TIM"/>
</dbReference>
<dbReference type="InterPro" id="IPR033983">
    <property type="entry name" value="Thiazole_synthase_ThiG"/>
</dbReference>
<dbReference type="InterPro" id="IPR008867">
    <property type="entry name" value="ThiG"/>
</dbReference>
<dbReference type="PANTHER" id="PTHR34266">
    <property type="entry name" value="THIAZOLE SYNTHASE"/>
    <property type="match status" value="1"/>
</dbReference>
<dbReference type="PANTHER" id="PTHR34266:SF2">
    <property type="entry name" value="THIAZOLE SYNTHASE"/>
    <property type="match status" value="1"/>
</dbReference>
<dbReference type="Pfam" id="PF05690">
    <property type="entry name" value="ThiG"/>
    <property type="match status" value="1"/>
</dbReference>
<dbReference type="SUPFAM" id="SSF110399">
    <property type="entry name" value="ThiG-like"/>
    <property type="match status" value="1"/>
</dbReference>
<reference key="1">
    <citation type="journal article" date="2008" name="Genome Biol.">
        <title>Encapsulated in silica: genome, proteome and physiology of the thermophilic bacterium Anoxybacillus flavithermus WK1.</title>
        <authorList>
            <person name="Saw J.H."/>
            <person name="Mountain B.W."/>
            <person name="Feng L."/>
            <person name="Omelchenko M.V."/>
            <person name="Hou S."/>
            <person name="Saito J.A."/>
            <person name="Stott M.B."/>
            <person name="Li D."/>
            <person name="Zhao G."/>
            <person name="Wu J."/>
            <person name="Galperin M.Y."/>
            <person name="Koonin E.V."/>
            <person name="Makarova K.S."/>
            <person name="Wolf Y.I."/>
            <person name="Rigden D.J."/>
            <person name="Dunfield P.F."/>
            <person name="Wang L."/>
            <person name="Alam M."/>
        </authorList>
    </citation>
    <scope>NUCLEOTIDE SEQUENCE [LARGE SCALE GENOMIC DNA]</scope>
    <source>
        <strain>DSM 21510 / WK1</strain>
    </source>
</reference>